<sequence>MSWLTPDVIEILLSILKAVVILLVVVSCGAFMSFGERRLLGLFQNRYGPNRVGWGGSLQLVADMIKMFFKEDWIPRFSDRVIFTLAPMIAFTSLLLAFAIVPVSPTWVVADLNIGILFFLMMAGLGVYAVLFAGWSSNNKYSLLGAMRASAQTLSYEVFLGLSLMGVVAQAGSFNMTDIVNNQAHLWNVIPQFFGFITFAIAGVAVCHRHPFDQPEAEQELADGYHIEYSGMKFGLFFVGEYIGIVTVSALIVTLFFGGWQGPWLPPFIWFALKTAFFMMMFILIRAALPRPRYDQVMSFGWKVCLPLTLINLLVTAAVILWQTAA</sequence>
<feature type="chain" id="PRO_1000067744" description="NADH-quinone oxidoreductase subunit H">
    <location>
        <begin position="1"/>
        <end position="326"/>
    </location>
</feature>
<feature type="transmembrane region" description="Helical" evidence="1">
    <location>
        <begin position="11"/>
        <end position="31"/>
    </location>
</feature>
<feature type="transmembrane region" description="Helical" evidence="1">
    <location>
        <begin position="81"/>
        <end position="101"/>
    </location>
</feature>
<feature type="transmembrane region" description="Helical" evidence="1">
    <location>
        <begin position="114"/>
        <end position="134"/>
    </location>
</feature>
<feature type="transmembrane region" description="Helical" evidence="1">
    <location>
        <begin position="154"/>
        <end position="174"/>
    </location>
</feature>
<feature type="transmembrane region" description="Helical" evidence="1">
    <location>
        <begin position="186"/>
        <end position="206"/>
    </location>
</feature>
<feature type="transmembrane region" description="Helical" evidence="1">
    <location>
        <begin position="237"/>
        <end position="257"/>
    </location>
</feature>
<feature type="transmembrane region" description="Helical" evidence="1">
    <location>
        <begin position="265"/>
        <end position="285"/>
    </location>
</feature>
<feature type="transmembrane region" description="Helical" evidence="1">
    <location>
        <begin position="302"/>
        <end position="322"/>
    </location>
</feature>
<evidence type="ECO:0000255" key="1">
    <source>
        <dbReference type="HAMAP-Rule" id="MF_01350"/>
    </source>
</evidence>
<gene>
    <name evidence="1" type="primary">nuoH</name>
    <name type="ordered locus">ESA_00938</name>
</gene>
<comment type="function">
    <text evidence="1">NDH-1 shuttles electrons from NADH, via FMN and iron-sulfur (Fe-S) centers, to quinones in the respiratory chain. The immediate electron acceptor for the enzyme in this species is believed to be ubiquinone. Couples the redox reaction to proton translocation (for every two electrons transferred, four hydrogen ions are translocated across the cytoplasmic membrane), and thus conserves the redox energy in a proton gradient. This subunit may bind ubiquinone.</text>
</comment>
<comment type="catalytic activity">
    <reaction evidence="1">
        <text>a quinone + NADH + 5 H(+)(in) = a quinol + NAD(+) + 4 H(+)(out)</text>
        <dbReference type="Rhea" id="RHEA:57888"/>
        <dbReference type="ChEBI" id="CHEBI:15378"/>
        <dbReference type="ChEBI" id="CHEBI:24646"/>
        <dbReference type="ChEBI" id="CHEBI:57540"/>
        <dbReference type="ChEBI" id="CHEBI:57945"/>
        <dbReference type="ChEBI" id="CHEBI:132124"/>
    </reaction>
</comment>
<comment type="subunit">
    <text evidence="1">NDH-1 is composed of 13 different subunits. Subunits NuoA, H, J, K, L, M, N constitute the membrane sector of the complex.</text>
</comment>
<comment type="subcellular location">
    <subcellularLocation>
        <location evidence="1">Cell inner membrane</location>
        <topology evidence="1">Multi-pass membrane protein</topology>
    </subcellularLocation>
</comment>
<comment type="similarity">
    <text evidence="1">Belongs to the complex I subunit 1 family.</text>
</comment>
<accession>A7MPB4</accession>
<organism>
    <name type="scientific">Cronobacter sakazakii (strain ATCC BAA-894)</name>
    <name type="common">Enterobacter sakazakii</name>
    <dbReference type="NCBI Taxonomy" id="290339"/>
    <lineage>
        <taxon>Bacteria</taxon>
        <taxon>Pseudomonadati</taxon>
        <taxon>Pseudomonadota</taxon>
        <taxon>Gammaproteobacteria</taxon>
        <taxon>Enterobacterales</taxon>
        <taxon>Enterobacteriaceae</taxon>
        <taxon>Cronobacter</taxon>
    </lineage>
</organism>
<protein>
    <recommendedName>
        <fullName evidence="1">NADH-quinone oxidoreductase subunit H</fullName>
        <ecNumber evidence="1">7.1.1.-</ecNumber>
    </recommendedName>
    <alternativeName>
        <fullName evidence="1">NADH dehydrogenase I subunit H</fullName>
    </alternativeName>
    <alternativeName>
        <fullName evidence="1">NDH-1 subunit H</fullName>
    </alternativeName>
</protein>
<keyword id="KW-0997">Cell inner membrane</keyword>
<keyword id="KW-1003">Cell membrane</keyword>
<keyword id="KW-0472">Membrane</keyword>
<keyword id="KW-0520">NAD</keyword>
<keyword id="KW-0874">Quinone</keyword>
<keyword id="KW-1185">Reference proteome</keyword>
<keyword id="KW-1278">Translocase</keyword>
<keyword id="KW-0812">Transmembrane</keyword>
<keyword id="KW-1133">Transmembrane helix</keyword>
<keyword id="KW-0830">Ubiquinone</keyword>
<reference key="1">
    <citation type="journal article" date="2010" name="PLoS ONE">
        <title>Genome sequence of Cronobacter sakazakii BAA-894 and comparative genomic hybridization analysis with other Cronobacter species.</title>
        <authorList>
            <person name="Kucerova E."/>
            <person name="Clifton S.W."/>
            <person name="Xia X.Q."/>
            <person name="Long F."/>
            <person name="Porwollik S."/>
            <person name="Fulton L."/>
            <person name="Fronick C."/>
            <person name="Minx P."/>
            <person name="Kyung K."/>
            <person name="Warren W."/>
            <person name="Fulton R."/>
            <person name="Feng D."/>
            <person name="Wollam A."/>
            <person name="Shah N."/>
            <person name="Bhonagiri V."/>
            <person name="Nash W.E."/>
            <person name="Hallsworth-Pepin K."/>
            <person name="Wilson R.K."/>
            <person name="McClelland M."/>
            <person name="Forsythe S.J."/>
        </authorList>
    </citation>
    <scope>NUCLEOTIDE SEQUENCE [LARGE SCALE GENOMIC DNA]</scope>
    <source>
        <strain>ATCC BAA-894</strain>
    </source>
</reference>
<dbReference type="EC" id="7.1.1.-" evidence="1"/>
<dbReference type="EMBL" id="CP000783">
    <property type="protein sequence ID" value="ABU76208.1"/>
    <property type="molecule type" value="Genomic_DNA"/>
</dbReference>
<dbReference type="RefSeq" id="WP_004388258.1">
    <property type="nucleotide sequence ID" value="NC_009778.1"/>
</dbReference>
<dbReference type="SMR" id="A7MPB4"/>
<dbReference type="GeneID" id="92805525"/>
<dbReference type="KEGG" id="esa:ESA_00938"/>
<dbReference type="HOGENOM" id="CLU_015134_0_1_6"/>
<dbReference type="Proteomes" id="UP000000260">
    <property type="component" value="Chromosome"/>
</dbReference>
<dbReference type="GO" id="GO:0005886">
    <property type="term" value="C:plasma membrane"/>
    <property type="evidence" value="ECO:0007669"/>
    <property type="project" value="UniProtKB-SubCell"/>
</dbReference>
<dbReference type="GO" id="GO:0003954">
    <property type="term" value="F:NADH dehydrogenase activity"/>
    <property type="evidence" value="ECO:0007669"/>
    <property type="project" value="TreeGrafter"/>
</dbReference>
<dbReference type="GO" id="GO:0016655">
    <property type="term" value="F:oxidoreductase activity, acting on NAD(P)H, quinone or similar compound as acceptor"/>
    <property type="evidence" value="ECO:0007669"/>
    <property type="project" value="UniProtKB-UniRule"/>
</dbReference>
<dbReference type="GO" id="GO:0048038">
    <property type="term" value="F:quinone binding"/>
    <property type="evidence" value="ECO:0007669"/>
    <property type="project" value="UniProtKB-KW"/>
</dbReference>
<dbReference type="GO" id="GO:0009060">
    <property type="term" value="P:aerobic respiration"/>
    <property type="evidence" value="ECO:0007669"/>
    <property type="project" value="TreeGrafter"/>
</dbReference>
<dbReference type="HAMAP" id="MF_01350">
    <property type="entry name" value="NDH1_NuoH"/>
    <property type="match status" value="1"/>
</dbReference>
<dbReference type="InterPro" id="IPR001694">
    <property type="entry name" value="NADH_UbQ_OxRdtase_su1/FPO"/>
</dbReference>
<dbReference type="InterPro" id="IPR018086">
    <property type="entry name" value="NADH_UbQ_OxRdtase_su1_CS"/>
</dbReference>
<dbReference type="NCBIfam" id="NF004740">
    <property type="entry name" value="PRK06076.1-1"/>
    <property type="match status" value="1"/>
</dbReference>
<dbReference type="NCBIfam" id="NF004741">
    <property type="entry name" value="PRK06076.1-2"/>
    <property type="match status" value="1"/>
</dbReference>
<dbReference type="PANTHER" id="PTHR11432">
    <property type="entry name" value="NADH DEHYDROGENASE SUBUNIT 1"/>
    <property type="match status" value="1"/>
</dbReference>
<dbReference type="PANTHER" id="PTHR11432:SF3">
    <property type="entry name" value="NADH-UBIQUINONE OXIDOREDUCTASE CHAIN 1"/>
    <property type="match status" value="1"/>
</dbReference>
<dbReference type="Pfam" id="PF00146">
    <property type="entry name" value="NADHdh"/>
    <property type="match status" value="1"/>
</dbReference>
<dbReference type="PROSITE" id="PS00667">
    <property type="entry name" value="COMPLEX1_ND1_1"/>
    <property type="match status" value="1"/>
</dbReference>
<dbReference type="PROSITE" id="PS00668">
    <property type="entry name" value="COMPLEX1_ND1_2"/>
    <property type="match status" value="1"/>
</dbReference>
<proteinExistence type="inferred from homology"/>
<name>NUOH_CROS8</name>